<protein>
    <recommendedName>
        <fullName evidence="1">Galactose-6-phosphate isomerase subunit LacA</fullName>
        <ecNumber evidence="1">5.3.1.26</ecNumber>
    </recommendedName>
</protein>
<reference key="1">
    <citation type="journal article" date="2002" name="Lancet">
        <title>Genome and virulence determinants of high virulence community-acquired MRSA.</title>
        <authorList>
            <person name="Baba T."/>
            <person name="Takeuchi F."/>
            <person name="Kuroda M."/>
            <person name="Yuzawa H."/>
            <person name="Aoki K."/>
            <person name="Oguchi A."/>
            <person name="Nagai Y."/>
            <person name="Iwama N."/>
            <person name="Asano K."/>
            <person name="Naimi T."/>
            <person name="Kuroda H."/>
            <person name="Cui L."/>
            <person name="Yamamoto K."/>
            <person name="Hiramatsu K."/>
        </authorList>
    </citation>
    <scope>NUCLEOTIDE SEQUENCE [LARGE SCALE GENOMIC DNA]</scope>
    <source>
        <strain>MW2</strain>
    </source>
</reference>
<keyword id="KW-0413">Isomerase</keyword>
<keyword id="KW-0423">Lactose metabolism</keyword>
<name>LACA_STAAW</name>
<dbReference type="EC" id="5.3.1.26" evidence="1"/>
<dbReference type="EMBL" id="BA000033">
    <property type="protein sequence ID" value="BAB95986.1"/>
    <property type="molecule type" value="Genomic_DNA"/>
</dbReference>
<dbReference type="RefSeq" id="WP_000974608.1">
    <property type="nucleotide sequence ID" value="NC_003923.1"/>
</dbReference>
<dbReference type="SMR" id="P65252"/>
<dbReference type="GeneID" id="98347039"/>
<dbReference type="KEGG" id="sam:MW2121"/>
<dbReference type="HOGENOM" id="CLU_091396_4_2_9"/>
<dbReference type="UniPathway" id="UPA00702">
    <property type="reaction ID" value="UER00714"/>
</dbReference>
<dbReference type="GO" id="GO:0050044">
    <property type="term" value="F:galactose-6-phosphate isomerase activity"/>
    <property type="evidence" value="ECO:0007669"/>
    <property type="project" value="UniProtKB-UniRule"/>
</dbReference>
<dbReference type="GO" id="GO:0004751">
    <property type="term" value="F:ribose-5-phosphate isomerase activity"/>
    <property type="evidence" value="ECO:0007669"/>
    <property type="project" value="TreeGrafter"/>
</dbReference>
<dbReference type="GO" id="GO:0019316">
    <property type="term" value="P:D-allose catabolic process"/>
    <property type="evidence" value="ECO:0007669"/>
    <property type="project" value="TreeGrafter"/>
</dbReference>
<dbReference type="GO" id="GO:0019388">
    <property type="term" value="P:galactose catabolic process"/>
    <property type="evidence" value="ECO:0007669"/>
    <property type="project" value="UniProtKB-UniPathway"/>
</dbReference>
<dbReference type="GO" id="GO:0019512">
    <property type="term" value="P:lactose catabolic process via tagatose-6-phosphate"/>
    <property type="evidence" value="ECO:0007669"/>
    <property type="project" value="UniProtKB-UniRule"/>
</dbReference>
<dbReference type="GO" id="GO:0009052">
    <property type="term" value="P:pentose-phosphate shunt, non-oxidative branch"/>
    <property type="evidence" value="ECO:0007669"/>
    <property type="project" value="TreeGrafter"/>
</dbReference>
<dbReference type="Gene3D" id="3.40.1400.10">
    <property type="entry name" value="Sugar-phosphate isomerase, RpiB/LacA/LacB"/>
    <property type="match status" value="1"/>
</dbReference>
<dbReference type="HAMAP" id="MF_01555">
    <property type="entry name" value="LacA"/>
    <property type="match status" value="1"/>
</dbReference>
<dbReference type="InterPro" id="IPR004783">
    <property type="entry name" value="LacA"/>
</dbReference>
<dbReference type="InterPro" id="IPR003500">
    <property type="entry name" value="RpiB_LacA_LacB"/>
</dbReference>
<dbReference type="InterPro" id="IPR036569">
    <property type="entry name" value="RpiB_LacA_LacB_sf"/>
</dbReference>
<dbReference type="NCBIfam" id="TIGR01118">
    <property type="entry name" value="lacA"/>
    <property type="match status" value="1"/>
</dbReference>
<dbReference type="NCBIfam" id="NF006380">
    <property type="entry name" value="PRK08621.1"/>
    <property type="match status" value="1"/>
</dbReference>
<dbReference type="NCBIfam" id="TIGR00689">
    <property type="entry name" value="rpiB_lacA_lacB"/>
    <property type="match status" value="1"/>
</dbReference>
<dbReference type="PANTHER" id="PTHR30345:SF5">
    <property type="entry name" value="GALACTOSE-6-PHOSPHATE ISOMERASE SUBUNIT LACA"/>
    <property type="match status" value="1"/>
</dbReference>
<dbReference type="PANTHER" id="PTHR30345">
    <property type="entry name" value="RIBOSE-5-PHOSPHATE ISOMERASE B"/>
    <property type="match status" value="1"/>
</dbReference>
<dbReference type="Pfam" id="PF02502">
    <property type="entry name" value="LacAB_rpiB"/>
    <property type="match status" value="1"/>
</dbReference>
<dbReference type="PIRSF" id="PIRSF005384">
    <property type="entry name" value="RpiB_LacA_B"/>
    <property type="match status" value="1"/>
</dbReference>
<dbReference type="SUPFAM" id="SSF89623">
    <property type="entry name" value="Ribose/Galactose isomerase RpiB/AlsB"/>
    <property type="match status" value="1"/>
</dbReference>
<feature type="chain" id="PRO_0000208110" description="Galactose-6-phosphate isomerase subunit LacA">
    <location>
        <begin position="1"/>
        <end position="142"/>
    </location>
</feature>
<comment type="catalytic activity">
    <reaction evidence="1">
        <text>aldehydo-D-galactose 6-phosphate = keto-D-tagatose 6-phosphate</text>
        <dbReference type="Rhea" id="RHEA:13033"/>
        <dbReference type="ChEBI" id="CHEBI:58255"/>
        <dbReference type="ChEBI" id="CHEBI:134283"/>
        <dbReference type="EC" id="5.3.1.26"/>
    </reaction>
</comment>
<comment type="pathway">
    <text evidence="1">Carbohydrate metabolism; D-galactose 6-phosphate degradation; D-tagatose 6-phosphate from D-galactose 6-phosphate: step 1/1.</text>
</comment>
<comment type="subunit">
    <text evidence="1">Heteromultimeric protein consisting of LacA and LacB.</text>
</comment>
<comment type="similarity">
    <text evidence="1">Belongs to the LacAB/RpiB family.</text>
</comment>
<proteinExistence type="inferred from homology"/>
<sequence length="142" mass="15395">MAIIIGSDEAGKRLKEVIKSYLLDNKYDVVDVTEGQEVDFVDATLAVAKDVQSQEGNLGIVIDAFGAGSFMVATKIKGMIAAEVSDERSGYMTRGHNNSRMITMGSEIVGDTLAKNVVKGFVEGKYDGGRHQIRVDMLNKMC</sequence>
<gene>
    <name evidence="1" type="primary">lacA</name>
    <name type="ordered locus">MW2121</name>
</gene>
<accession>P65252</accession>
<accession>Q99S74</accession>
<organism>
    <name type="scientific">Staphylococcus aureus (strain MW2)</name>
    <dbReference type="NCBI Taxonomy" id="196620"/>
    <lineage>
        <taxon>Bacteria</taxon>
        <taxon>Bacillati</taxon>
        <taxon>Bacillota</taxon>
        <taxon>Bacilli</taxon>
        <taxon>Bacillales</taxon>
        <taxon>Staphylococcaceae</taxon>
        <taxon>Staphylococcus</taxon>
    </lineage>
</organism>
<evidence type="ECO:0000255" key="1">
    <source>
        <dbReference type="HAMAP-Rule" id="MF_01555"/>
    </source>
</evidence>